<reference key="1">
    <citation type="journal article" date="2009" name="J. Bacteriol.">
        <title>Genome sequence of Azotobacter vinelandii, an obligate aerobe specialized to support diverse anaerobic metabolic processes.</title>
        <authorList>
            <person name="Setubal J.C."/>
            <person name="Dos Santos P."/>
            <person name="Goldman B.S."/>
            <person name="Ertesvaag H."/>
            <person name="Espin G."/>
            <person name="Rubio L.M."/>
            <person name="Valla S."/>
            <person name="Almeida N.F."/>
            <person name="Balasubramanian D."/>
            <person name="Cromes L."/>
            <person name="Curatti L."/>
            <person name="Du Z."/>
            <person name="Godsy E."/>
            <person name="Goodner B."/>
            <person name="Hellner-Burris K."/>
            <person name="Hernandez J.A."/>
            <person name="Houmiel K."/>
            <person name="Imperial J."/>
            <person name="Kennedy C."/>
            <person name="Larson T.J."/>
            <person name="Latreille P."/>
            <person name="Ligon L.S."/>
            <person name="Lu J."/>
            <person name="Maerk M."/>
            <person name="Miller N.M."/>
            <person name="Norton S."/>
            <person name="O'Carroll I.P."/>
            <person name="Paulsen I."/>
            <person name="Raulfs E.C."/>
            <person name="Roemer R."/>
            <person name="Rosser J."/>
            <person name="Segura D."/>
            <person name="Slater S."/>
            <person name="Stricklin S.L."/>
            <person name="Studholme D.J."/>
            <person name="Sun J."/>
            <person name="Viana C.J."/>
            <person name="Wallin E."/>
            <person name="Wang B."/>
            <person name="Wheeler C."/>
            <person name="Zhu H."/>
            <person name="Dean D.R."/>
            <person name="Dixon R."/>
            <person name="Wood D."/>
        </authorList>
    </citation>
    <scope>NUCLEOTIDE SEQUENCE [LARGE SCALE GENOMIC DNA]</scope>
    <source>
        <strain>DJ / ATCC BAA-1303</strain>
    </source>
</reference>
<sequence length="543" mass="59660">MTRYIFVTGGVVSSLGKGIASASLAAILEARGLKVTLLKLDPYINVDPGTMSPFQHGEVFVTHDGAETDLDLGHYERFVRTTMTRNNNFTTGRVYEDVLRRERRGDYLGATIQVIPHITDEIKRRIIKGAGNADVAMVEIGGTVGDIESQPFLEAIRQLRLEVGAKRAMLIHLTLVPYIATAGETKTKPTQHSVKELRSIGLQPDVLICRSDHPIDISSRRKIALFTNVEERAVIALEDVDTIYKIPSVLHAQGLDDIVVERFGLACGSADLSEWERVVDAKLHPEKEVTIAMVGKYMELLDAYKSLIEAMGHAGIQNRTRVNLRYIDSEDIENQGTALLEGADAILVPGGFGLRGVEGKIAAVRYARENKVPYLGICLGMQVAVIEYARDVLGWADANSTEFDKSCGHPVVGLITEWQDATGATEVRSESSDLGGTMRLGAQECQLEANSQVRQCYGKDEVVERHRHRYEVNNNLLPHLIEAGLKVTGRSGDGALVEVIEVADHPWFVACQFHPEFTSTPRDGHPLFSGFVNAALAQKARKA</sequence>
<protein>
    <recommendedName>
        <fullName evidence="1">CTP synthase</fullName>
        <ecNumber evidence="1">6.3.4.2</ecNumber>
    </recommendedName>
    <alternativeName>
        <fullName evidence="1">Cytidine 5'-triphosphate synthase</fullName>
    </alternativeName>
    <alternativeName>
        <fullName evidence="1">Cytidine triphosphate synthetase</fullName>
        <shortName evidence="1">CTP synthetase</shortName>
        <shortName evidence="1">CTPS</shortName>
    </alternativeName>
    <alternativeName>
        <fullName evidence="1">UTP--ammonia ligase</fullName>
    </alternativeName>
</protein>
<evidence type="ECO:0000255" key="1">
    <source>
        <dbReference type="HAMAP-Rule" id="MF_01227"/>
    </source>
</evidence>
<comment type="function">
    <text evidence="1">Catalyzes the ATP-dependent amination of UTP to CTP with either L-glutamine or ammonia as the source of nitrogen. Regulates intracellular CTP levels through interactions with the four ribonucleotide triphosphates.</text>
</comment>
<comment type="catalytic activity">
    <reaction evidence="1">
        <text>UTP + L-glutamine + ATP + H2O = CTP + L-glutamate + ADP + phosphate + 2 H(+)</text>
        <dbReference type="Rhea" id="RHEA:26426"/>
        <dbReference type="ChEBI" id="CHEBI:15377"/>
        <dbReference type="ChEBI" id="CHEBI:15378"/>
        <dbReference type="ChEBI" id="CHEBI:29985"/>
        <dbReference type="ChEBI" id="CHEBI:30616"/>
        <dbReference type="ChEBI" id="CHEBI:37563"/>
        <dbReference type="ChEBI" id="CHEBI:43474"/>
        <dbReference type="ChEBI" id="CHEBI:46398"/>
        <dbReference type="ChEBI" id="CHEBI:58359"/>
        <dbReference type="ChEBI" id="CHEBI:456216"/>
        <dbReference type="EC" id="6.3.4.2"/>
    </reaction>
</comment>
<comment type="catalytic activity">
    <reaction evidence="1">
        <text>L-glutamine + H2O = L-glutamate + NH4(+)</text>
        <dbReference type="Rhea" id="RHEA:15889"/>
        <dbReference type="ChEBI" id="CHEBI:15377"/>
        <dbReference type="ChEBI" id="CHEBI:28938"/>
        <dbReference type="ChEBI" id="CHEBI:29985"/>
        <dbReference type="ChEBI" id="CHEBI:58359"/>
    </reaction>
</comment>
<comment type="catalytic activity">
    <reaction evidence="1">
        <text>UTP + NH4(+) + ATP = CTP + ADP + phosphate + 2 H(+)</text>
        <dbReference type="Rhea" id="RHEA:16597"/>
        <dbReference type="ChEBI" id="CHEBI:15378"/>
        <dbReference type="ChEBI" id="CHEBI:28938"/>
        <dbReference type="ChEBI" id="CHEBI:30616"/>
        <dbReference type="ChEBI" id="CHEBI:37563"/>
        <dbReference type="ChEBI" id="CHEBI:43474"/>
        <dbReference type="ChEBI" id="CHEBI:46398"/>
        <dbReference type="ChEBI" id="CHEBI:456216"/>
    </reaction>
</comment>
<comment type="activity regulation">
    <text evidence="1">Allosterically activated by GTP, when glutamine is the substrate; GTP has no effect on the reaction when ammonia is the substrate. The allosteric effector GTP functions by stabilizing the protein conformation that binds the tetrahedral intermediate(s) formed during glutamine hydrolysis. Inhibited by the product CTP, via allosteric rather than competitive inhibition.</text>
</comment>
<comment type="pathway">
    <text evidence="1">Pyrimidine metabolism; CTP biosynthesis via de novo pathway; CTP from UDP: step 2/2.</text>
</comment>
<comment type="subunit">
    <text evidence="1">Homotetramer.</text>
</comment>
<comment type="miscellaneous">
    <text evidence="1">CTPSs have evolved a hybrid strategy for distinguishing between UTP and CTP. The overlapping regions of the product feedback inhibitory and substrate sites recognize a common feature in both compounds, the triphosphate moiety. To differentiate isosteric substrate and product pyrimidine rings, an additional pocket far from the expected kinase/ligase catalytic site, specifically recognizes the cytosine and ribose portions of the product inhibitor.</text>
</comment>
<comment type="similarity">
    <text evidence="1">Belongs to the CTP synthase family.</text>
</comment>
<feature type="chain" id="PRO_1000214007" description="CTP synthase">
    <location>
        <begin position="1"/>
        <end position="543"/>
    </location>
</feature>
<feature type="domain" description="Glutamine amidotransferase type-1" evidence="1">
    <location>
        <begin position="290"/>
        <end position="541"/>
    </location>
</feature>
<feature type="region of interest" description="Amidoligase domain" evidence="1">
    <location>
        <begin position="1"/>
        <end position="265"/>
    </location>
</feature>
<feature type="active site" description="Nucleophile; for glutamine hydrolysis" evidence="1">
    <location>
        <position position="378"/>
    </location>
</feature>
<feature type="active site" evidence="1">
    <location>
        <position position="514"/>
    </location>
</feature>
<feature type="active site" evidence="1">
    <location>
        <position position="516"/>
    </location>
</feature>
<feature type="binding site" evidence="1">
    <location>
        <position position="13"/>
    </location>
    <ligand>
        <name>CTP</name>
        <dbReference type="ChEBI" id="CHEBI:37563"/>
        <note>allosteric inhibitor</note>
    </ligand>
</feature>
<feature type="binding site" evidence="1">
    <location>
        <position position="13"/>
    </location>
    <ligand>
        <name>UTP</name>
        <dbReference type="ChEBI" id="CHEBI:46398"/>
    </ligand>
</feature>
<feature type="binding site" evidence="1">
    <location>
        <begin position="14"/>
        <end position="19"/>
    </location>
    <ligand>
        <name>ATP</name>
        <dbReference type="ChEBI" id="CHEBI:30616"/>
    </ligand>
</feature>
<feature type="binding site" evidence="1">
    <location>
        <position position="71"/>
    </location>
    <ligand>
        <name>ATP</name>
        <dbReference type="ChEBI" id="CHEBI:30616"/>
    </ligand>
</feature>
<feature type="binding site" evidence="1">
    <location>
        <position position="71"/>
    </location>
    <ligand>
        <name>Mg(2+)</name>
        <dbReference type="ChEBI" id="CHEBI:18420"/>
    </ligand>
</feature>
<feature type="binding site" evidence="1">
    <location>
        <position position="139"/>
    </location>
    <ligand>
        <name>Mg(2+)</name>
        <dbReference type="ChEBI" id="CHEBI:18420"/>
    </ligand>
</feature>
<feature type="binding site" evidence="1">
    <location>
        <begin position="146"/>
        <end position="148"/>
    </location>
    <ligand>
        <name>CTP</name>
        <dbReference type="ChEBI" id="CHEBI:37563"/>
        <note>allosteric inhibitor</note>
    </ligand>
</feature>
<feature type="binding site" evidence="1">
    <location>
        <begin position="186"/>
        <end position="191"/>
    </location>
    <ligand>
        <name>CTP</name>
        <dbReference type="ChEBI" id="CHEBI:37563"/>
        <note>allosteric inhibitor</note>
    </ligand>
</feature>
<feature type="binding site" evidence="1">
    <location>
        <begin position="186"/>
        <end position="191"/>
    </location>
    <ligand>
        <name>UTP</name>
        <dbReference type="ChEBI" id="CHEBI:46398"/>
    </ligand>
</feature>
<feature type="binding site" evidence="1">
    <location>
        <position position="222"/>
    </location>
    <ligand>
        <name>CTP</name>
        <dbReference type="ChEBI" id="CHEBI:37563"/>
        <note>allosteric inhibitor</note>
    </ligand>
</feature>
<feature type="binding site" evidence="1">
    <location>
        <position position="222"/>
    </location>
    <ligand>
        <name>UTP</name>
        <dbReference type="ChEBI" id="CHEBI:46398"/>
    </ligand>
</feature>
<feature type="binding site" evidence="1">
    <location>
        <position position="351"/>
    </location>
    <ligand>
        <name>L-glutamine</name>
        <dbReference type="ChEBI" id="CHEBI:58359"/>
    </ligand>
</feature>
<feature type="binding site" evidence="1">
    <location>
        <begin position="379"/>
        <end position="382"/>
    </location>
    <ligand>
        <name>L-glutamine</name>
        <dbReference type="ChEBI" id="CHEBI:58359"/>
    </ligand>
</feature>
<feature type="binding site" evidence="1">
    <location>
        <position position="402"/>
    </location>
    <ligand>
        <name>L-glutamine</name>
        <dbReference type="ChEBI" id="CHEBI:58359"/>
    </ligand>
</feature>
<feature type="binding site" evidence="1">
    <location>
        <position position="469"/>
    </location>
    <ligand>
        <name>L-glutamine</name>
        <dbReference type="ChEBI" id="CHEBI:58359"/>
    </ligand>
</feature>
<gene>
    <name evidence="1" type="primary">pyrG</name>
    <name type="ordered locus">Avin_38810</name>
</gene>
<organism>
    <name type="scientific">Azotobacter vinelandii (strain DJ / ATCC BAA-1303)</name>
    <dbReference type="NCBI Taxonomy" id="322710"/>
    <lineage>
        <taxon>Bacteria</taxon>
        <taxon>Pseudomonadati</taxon>
        <taxon>Pseudomonadota</taxon>
        <taxon>Gammaproteobacteria</taxon>
        <taxon>Pseudomonadales</taxon>
        <taxon>Pseudomonadaceae</taxon>
        <taxon>Azotobacter</taxon>
    </lineage>
</organism>
<dbReference type="EC" id="6.3.4.2" evidence="1"/>
<dbReference type="EMBL" id="CP001157">
    <property type="protein sequence ID" value="ACO80021.1"/>
    <property type="molecule type" value="Genomic_DNA"/>
</dbReference>
<dbReference type="RefSeq" id="WP_012702396.1">
    <property type="nucleotide sequence ID" value="NC_012560.1"/>
</dbReference>
<dbReference type="SMR" id="C1DSS8"/>
<dbReference type="STRING" id="322710.Avin_38810"/>
<dbReference type="EnsemblBacteria" id="ACO80021">
    <property type="protein sequence ID" value="ACO80021"/>
    <property type="gene ID" value="Avin_38810"/>
</dbReference>
<dbReference type="GeneID" id="88186839"/>
<dbReference type="KEGG" id="avn:Avin_38810"/>
<dbReference type="eggNOG" id="COG0504">
    <property type="taxonomic scope" value="Bacteria"/>
</dbReference>
<dbReference type="HOGENOM" id="CLU_011675_5_0_6"/>
<dbReference type="OrthoDB" id="9801107at2"/>
<dbReference type="UniPathway" id="UPA00159">
    <property type="reaction ID" value="UER00277"/>
</dbReference>
<dbReference type="Proteomes" id="UP000002424">
    <property type="component" value="Chromosome"/>
</dbReference>
<dbReference type="GO" id="GO:0005829">
    <property type="term" value="C:cytosol"/>
    <property type="evidence" value="ECO:0007669"/>
    <property type="project" value="TreeGrafter"/>
</dbReference>
<dbReference type="GO" id="GO:0005524">
    <property type="term" value="F:ATP binding"/>
    <property type="evidence" value="ECO:0007669"/>
    <property type="project" value="UniProtKB-KW"/>
</dbReference>
<dbReference type="GO" id="GO:0003883">
    <property type="term" value="F:CTP synthase activity"/>
    <property type="evidence" value="ECO:0007669"/>
    <property type="project" value="UniProtKB-UniRule"/>
</dbReference>
<dbReference type="GO" id="GO:0004359">
    <property type="term" value="F:glutaminase activity"/>
    <property type="evidence" value="ECO:0007669"/>
    <property type="project" value="RHEA"/>
</dbReference>
<dbReference type="GO" id="GO:0042802">
    <property type="term" value="F:identical protein binding"/>
    <property type="evidence" value="ECO:0007669"/>
    <property type="project" value="TreeGrafter"/>
</dbReference>
<dbReference type="GO" id="GO:0046872">
    <property type="term" value="F:metal ion binding"/>
    <property type="evidence" value="ECO:0007669"/>
    <property type="project" value="UniProtKB-KW"/>
</dbReference>
<dbReference type="GO" id="GO:0044210">
    <property type="term" value="P:'de novo' CTP biosynthetic process"/>
    <property type="evidence" value="ECO:0007669"/>
    <property type="project" value="UniProtKB-UniRule"/>
</dbReference>
<dbReference type="GO" id="GO:0019856">
    <property type="term" value="P:pyrimidine nucleobase biosynthetic process"/>
    <property type="evidence" value="ECO:0007669"/>
    <property type="project" value="TreeGrafter"/>
</dbReference>
<dbReference type="CDD" id="cd03113">
    <property type="entry name" value="CTPS_N"/>
    <property type="match status" value="1"/>
</dbReference>
<dbReference type="CDD" id="cd01746">
    <property type="entry name" value="GATase1_CTP_Synthase"/>
    <property type="match status" value="1"/>
</dbReference>
<dbReference type="FunFam" id="3.40.50.300:FF:000009">
    <property type="entry name" value="CTP synthase"/>
    <property type="match status" value="1"/>
</dbReference>
<dbReference type="FunFam" id="3.40.50.880:FF:000002">
    <property type="entry name" value="CTP synthase"/>
    <property type="match status" value="1"/>
</dbReference>
<dbReference type="Gene3D" id="3.40.50.880">
    <property type="match status" value="1"/>
</dbReference>
<dbReference type="Gene3D" id="3.40.50.300">
    <property type="entry name" value="P-loop containing nucleotide triphosphate hydrolases"/>
    <property type="match status" value="1"/>
</dbReference>
<dbReference type="HAMAP" id="MF_01227">
    <property type="entry name" value="PyrG"/>
    <property type="match status" value="1"/>
</dbReference>
<dbReference type="InterPro" id="IPR029062">
    <property type="entry name" value="Class_I_gatase-like"/>
</dbReference>
<dbReference type="InterPro" id="IPR004468">
    <property type="entry name" value="CTP_synthase"/>
</dbReference>
<dbReference type="InterPro" id="IPR017456">
    <property type="entry name" value="CTP_synthase_N"/>
</dbReference>
<dbReference type="InterPro" id="IPR017926">
    <property type="entry name" value="GATASE"/>
</dbReference>
<dbReference type="InterPro" id="IPR033828">
    <property type="entry name" value="GATase1_CTP_Synthase"/>
</dbReference>
<dbReference type="InterPro" id="IPR027417">
    <property type="entry name" value="P-loop_NTPase"/>
</dbReference>
<dbReference type="NCBIfam" id="NF003792">
    <property type="entry name" value="PRK05380.1"/>
    <property type="match status" value="1"/>
</dbReference>
<dbReference type="NCBIfam" id="TIGR00337">
    <property type="entry name" value="PyrG"/>
    <property type="match status" value="1"/>
</dbReference>
<dbReference type="PANTHER" id="PTHR11550">
    <property type="entry name" value="CTP SYNTHASE"/>
    <property type="match status" value="1"/>
</dbReference>
<dbReference type="PANTHER" id="PTHR11550:SF0">
    <property type="entry name" value="CTP SYNTHASE-RELATED"/>
    <property type="match status" value="1"/>
</dbReference>
<dbReference type="Pfam" id="PF06418">
    <property type="entry name" value="CTP_synth_N"/>
    <property type="match status" value="1"/>
</dbReference>
<dbReference type="Pfam" id="PF00117">
    <property type="entry name" value="GATase"/>
    <property type="match status" value="1"/>
</dbReference>
<dbReference type="SUPFAM" id="SSF52317">
    <property type="entry name" value="Class I glutamine amidotransferase-like"/>
    <property type="match status" value="1"/>
</dbReference>
<dbReference type="SUPFAM" id="SSF52540">
    <property type="entry name" value="P-loop containing nucleoside triphosphate hydrolases"/>
    <property type="match status" value="1"/>
</dbReference>
<dbReference type="PROSITE" id="PS51273">
    <property type="entry name" value="GATASE_TYPE_1"/>
    <property type="match status" value="1"/>
</dbReference>
<keyword id="KW-0067">ATP-binding</keyword>
<keyword id="KW-0315">Glutamine amidotransferase</keyword>
<keyword id="KW-0436">Ligase</keyword>
<keyword id="KW-0460">Magnesium</keyword>
<keyword id="KW-0479">Metal-binding</keyword>
<keyword id="KW-0547">Nucleotide-binding</keyword>
<keyword id="KW-0665">Pyrimidine biosynthesis</keyword>
<accession>C1DSS8</accession>
<name>PYRG_AZOVD</name>
<proteinExistence type="inferred from homology"/>